<dbReference type="EC" id="2.8.1.8" evidence="1"/>
<dbReference type="EMBL" id="AP009351">
    <property type="protein sequence ID" value="BAF67068.1"/>
    <property type="molecule type" value="Genomic_DNA"/>
</dbReference>
<dbReference type="RefSeq" id="WP_000201875.1">
    <property type="nucleotide sequence ID" value="NZ_JBBIAE010000002.1"/>
</dbReference>
<dbReference type="SMR" id="A6QFD6"/>
<dbReference type="GeneID" id="98345243"/>
<dbReference type="KEGG" id="sae:NWMN_0796"/>
<dbReference type="HOGENOM" id="CLU_033144_2_1_9"/>
<dbReference type="Proteomes" id="UP000006386">
    <property type="component" value="Chromosome"/>
</dbReference>
<dbReference type="GO" id="GO:0005737">
    <property type="term" value="C:cytoplasm"/>
    <property type="evidence" value="ECO:0007669"/>
    <property type="project" value="UniProtKB-SubCell"/>
</dbReference>
<dbReference type="GO" id="GO:0051539">
    <property type="term" value="F:4 iron, 4 sulfur cluster binding"/>
    <property type="evidence" value="ECO:0007669"/>
    <property type="project" value="UniProtKB-UniRule"/>
</dbReference>
<dbReference type="GO" id="GO:0016992">
    <property type="term" value="F:lipoate synthase activity"/>
    <property type="evidence" value="ECO:0007669"/>
    <property type="project" value="UniProtKB-UniRule"/>
</dbReference>
<dbReference type="GO" id="GO:0046872">
    <property type="term" value="F:metal ion binding"/>
    <property type="evidence" value="ECO:0007669"/>
    <property type="project" value="UniProtKB-KW"/>
</dbReference>
<dbReference type="CDD" id="cd01335">
    <property type="entry name" value="Radical_SAM"/>
    <property type="match status" value="1"/>
</dbReference>
<dbReference type="FunFam" id="3.20.20.70:FF:000040">
    <property type="entry name" value="Lipoyl synthase"/>
    <property type="match status" value="1"/>
</dbReference>
<dbReference type="Gene3D" id="3.20.20.70">
    <property type="entry name" value="Aldolase class I"/>
    <property type="match status" value="1"/>
</dbReference>
<dbReference type="HAMAP" id="MF_00206">
    <property type="entry name" value="Lipoyl_synth"/>
    <property type="match status" value="1"/>
</dbReference>
<dbReference type="InterPro" id="IPR013785">
    <property type="entry name" value="Aldolase_TIM"/>
</dbReference>
<dbReference type="InterPro" id="IPR006638">
    <property type="entry name" value="Elp3/MiaA/NifB-like_rSAM"/>
</dbReference>
<dbReference type="InterPro" id="IPR031691">
    <property type="entry name" value="LIAS_N"/>
</dbReference>
<dbReference type="InterPro" id="IPR003698">
    <property type="entry name" value="Lipoyl_synth"/>
</dbReference>
<dbReference type="InterPro" id="IPR007197">
    <property type="entry name" value="rSAM"/>
</dbReference>
<dbReference type="NCBIfam" id="TIGR00510">
    <property type="entry name" value="lipA"/>
    <property type="match status" value="1"/>
</dbReference>
<dbReference type="NCBIfam" id="NF004019">
    <property type="entry name" value="PRK05481.1"/>
    <property type="match status" value="1"/>
</dbReference>
<dbReference type="NCBIfam" id="NF009544">
    <property type="entry name" value="PRK12928.1"/>
    <property type="match status" value="1"/>
</dbReference>
<dbReference type="PANTHER" id="PTHR10949">
    <property type="entry name" value="LIPOYL SYNTHASE"/>
    <property type="match status" value="1"/>
</dbReference>
<dbReference type="PANTHER" id="PTHR10949:SF0">
    <property type="entry name" value="LIPOYL SYNTHASE, MITOCHONDRIAL"/>
    <property type="match status" value="1"/>
</dbReference>
<dbReference type="Pfam" id="PF16881">
    <property type="entry name" value="LIAS_N"/>
    <property type="match status" value="1"/>
</dbReference>
<dbReference type="Pfam" id="PF04055">
    <property type="entry name" value="Radical_SAM"/>
    <property type="match status" value="1"/>
</dbReference>
<dbReference type="PIRSF" id="PIRSF005963">
    <property type="entry name" value="Lipoyl_synth"/>
    <property type="match status" value="1"/>
</dbReference>
<dbReference type="SFLD" id="SFLDF00271">
    <property type="entry name" value="lipoyl_synthase"/>
    <property type="match status" value="1"/>
</dbReference>
<dbReference type="SFLD" id="SFLDS00029">
    <property type="entry name" value="Radical_SAM"/>
    <property type="match status" value="1"/>
</dbReference>
<dbReference type="SMART" id="SM00729">
    <property type="entry name" value="Elp3"/>
    <property type="match status" value="1"/>
</dbReference>
<dbReference type="SUPFAM" id="SSF102114">
    <property type="entry name" value="Radical SAM enzymes"/>
    <property type="match status" value="1"/>
</dbReference>
<dbReference type="PROSITE" id="PS51918">
    <property type="entry name" value="RADICAL_SAM"/>
    <property type="match status" value="1"/>
</dbReference>
<accession>A6QFD6</accession>
<protein>
    <recommendedName>
        <fullName evidence="1">Lipoyl synthase</fullName>
        <ecNumber evidence="1">2.8.1.8</ecNumber>
    </recommendedName>
    <alternativeName>
        <fullName evidence="1">Lip-syn</fullName>
        <shortName evidence="1">LS</shortName>
    </alternativeName>
    <alternativeName>
        <fullName evidence="1">Lipoate synthase</fullName>
    </alternativeName>
    <alternativeName>
        <fullName evidence="1">Lipoic acid synthase</fullName>
    </alternativeName>
    <alternativeName>
        <fullName evidence="1">Sulfur insertion protein LipA</fullName>
    </alternativeName>
</protein>
<evidence type="ECO:0000255" key="1">
    <source>
        <dbReference type="HAMAP-Rule" id="MF_00206"/>
    </source>
</evidence>
<evidence type="ECO:0000255" key="2">
    <source>
        <dbReference type="PROSITE-ProRule" id="PRU01266"/>
    </source>
</evidence>
<evidence type="ECO:0000256" key="3">
    <source>
        <dbReference type="SAM" id="MobiDB-lite"/>
    </source>
</evidence>
<comment type="function">
    <text evidence="1">Catalyzes the radical-mediated insertion of two sulfur atoms into the C-6 and C-8 positions of the octanoyl moiety bound to the lipoyl domains of lipoate-dependent enzymes, thereby converting the octanoylated domains into lipoylated derivatives.</text>
</comment>
<comment type="catalytic activity">
    <reaction evidence="1">
        <text>[[Fe-S] cluster scaffold protein carrying a second [4Fe-4S](2+) cluster] + N(6)-octanoyl-L-lysyl-[protein] + 2 oxidized [2Fe-2S]-[ferredoxin] + 2 S-adenosyl-L-methionine + 4 H(+) = [[Fe-S] cluster scaffold protein] + N(6)-[(R)-dihydrolipoyl]-L-lysyl-[protein] + 4 Fe(3+) + 2 hydrogen sulfide + 2 5'-deoxyadenosine + 2 L-methionine + 2 reduced [2Fe-2S]-[ferredoxin]</text>
        <dbReference type="Rhea" id="RHEA:16585"/>
        <dbReference type="Rhea" id="RHEA-COMP:9928"/>
        <dbReference type="Rhea" id="RHEA-COMP:10000"/>
        <dbReference type="Rhea" id="RHEA-COMP:10001"/>
        <dbReference type="Rhea" id="RHEA-COMP:10475"/>
        <dbReference type="Rhea" id="RHEA-COMP:14568"/>
        <dbReference type="Rhea" id="RHEA-COMP:14569"/>
        <dbReference type="ChEBI" id="CHEBI:15378"/>
        <dbReference type="ChEBI" id="CHEBI:17319"/>
        <dbReference type="ChEBI" id="CHEBI:29034"/>
        <dbReference type="ChEBI" id="CHEBI:29919"/>
        <dbReference type="ChEBI" id="CHEBI:33722"/>
        <dbReference type="ChEBI" id="CHEBI:33737"/>
        <dbReference type="ChEBI" id="CHEBI:33738"/>
        <dbReference type="ChEBI" id="CHEBI:57844"/>
        <dbReference type="ChEBI" id="CHEBI:59789"/>
        <dbReference type="ChEBI" id="CHEBI:78809"/>
        <dbReference type="ChEBI" id="CHEBI:83100"/>
        <dbReference type="EC" id="2.8.1.8"/>
    </reaction>
</comment>
<comment type="cofactor">
    <cofactor evidence="1">
        <name>[4Fe-4S] cluster</name>
        <dbReference type="ChEBI" id="CHEBI:49883"/>
    </cofactor>
    <text evidence="1">Binds 2 [4Fe-4S] clusters per subunit. One cluster is coordinated with 3 cysteines and an exchangeable S-adenosyl-L-methionine.</text>
</comment>
<comment type="pathway">
    <text evidence="1">Protein modification; protein lipoylation via endogenous pathway; protein N(6)-(lipoyl)lysine from octanoyl-[acyl-carrier-protein].</text>
</comment>
<comment type="subcellular location">
    <subcellularLocation>
        <location evidence="1">Cytoplasm</location>
    </subcellularLocation>
</comment>
<comment type="similarity">
    <text evidence="1">Belongs to the radical SAM superfamily. Lipoyl synthase family.</text>
</comment>
<organism>
    <name type="scientific">Staphylococcus aureus (strain Newman)</name>
    <dbReference type="NCBI Taxonomy" id="426430"/>
    <lineage>
        <taxon>Bacteria</taxon>
        <taxon>Bacillati</taxon>
        <taxon>Bacillota</taxon>
        <taxon>Bacilli</taxon>
        <taxon>Bacillales</taxon>
        <taxon>Staphylococcaceae</taxon>
        <taxon>Staphylococcus</taxon>
    </lineage>
</organism>
<reference key="1">
    <citation type="journal article" date="2008" name="J. Bacteriol.">
        <title>Genome sequence of Staphylococcus aureus strain Newman and comparative analysis of staphylococcal genomes: polymorphism and evolution of two major pathogenicity islands.</title>
        <authorList>
            <person name="Baba T."/>
            <person name="Bae T."/>
            <person name="Schneewind O."/>
            <person name="Takeuchi F."/>
            <person name="Hiramatsu K."/>
        </authorList>
    </citation>
    <scope>NUCLEOTIDE SEQUENCE [LARGE SCALE GENOMIC DNA]</scope>
    <source>
        <strain>Newman</strain>
    </source>
</reference>
<feature type="chain" id="PRO_1000071730" description="Lipoyl synthase">
    <location>
        <begin position="1"/>
        <end position="305"/>
    </location>
</feature>
<feature type="domain" description="Radical SAM core" evidence="2">
    <location>
        <begin position="54"/>
        <end position="270"/>
    </location>
</feature>
<feature type="region of interest" description="Disordered" evidence="3">
    <location>
        <begin position="283"/>
        <end position="305"/>
    </location>
</feature>
<feature type="compositionally biased region" description="Basic and acidic residues" evidence="3">
    <location>
        <begin position="283"/>
        <end position="298"/>
    </location>
</feature>
<feature type="binding site" evidence="1">
    <location>
        <position position="41"/>
    </location>
    <ligand>
        <name>[4Fe-4S] cluster</name>
        <dbReference type="ChEBI" id="CHEBI:49883"/>
        <label>1</label>
    </ligand>
</feature>
<feature type="binding site" evidence="1">
    <location>
        <position position="46"/>
    </location>
    <ligand>
        <name>[4Fe-4S] cluster</name>
        <dbReference type="ChEBI" id="CHEBI:49883"/>
        <label>1</label>
    </ligand>
</feature>
<feature type="binding site" evidence="1">
    <location>
        <position position="52"/>
    </location>
    <ligand>
        <name>[4Fe-4S] cluster</name>
        <dbReference type="ChEBI" id="CHEBI:49883"/>
        <label>1</label>
    </ligand>
</feature>
<feature type="binding site" evidence="1">
    <location>
        <position position="68"/>
    </location>
    <ligand>
        <name>[4Fe-4S] cluster</name>
        <dbReference type="ChEBI" id="CHEBI:49883"/>
        <label>2</label>
        <note>4Fe-4S-S-AdoMet</note>
    </ligand>
</feature>
<feature type="binding site" evidence="1">
    <location>
        <position position="72"/>
    </location>
    <ligand>
        <name>[4Fe-4S] cluster</name>
        <dbReference type="ChEBI" id="CHEBI:49883"/>
        <label>2</label>
        <note>4Fe-4S-S-AdoMet</note>
    </ligand>
</feature>
<feature type="binding site" evidence="1">
    <location>
        <position position="75"/>
    </location>
    <ligand>
        <name>[4Fe-4S] cluster</name>
        <dbReference type="ChEBI" id="CHEBI:49883"/>
        <label>2</label>
        <note>4Fe-4S-S-AdoMet</note>
    </ligand>
</feature>
<feature type="binding site" evidence="1">
    <location>
        <position position="281"/>
    </location>
    <ligand>
        <name>[4Fe-4S] cluster</name>
        <dbReference type="ChEBI" id="CHEBI:49883"/>
        <label>1</label>
    </ligand>
</feature>
<sequence length="305" mass="34885">MATKNEEILRKPDWLKIKLNTNENYTGLKKMMREKNLNTVCEEAKCPNIHECWGARRTATFMILGAVCTRACRFCAVKTGLPNELDLNEPERVAESVELMNLKHVVITAVARDDLRDAGSNVYAETVRKVRERNPFTTIEILPSDMGGDYDALETLMASRPDILNHNIETVRRLTPRVRARATYDRTLEFLRRSKELQPDIPTKSSIMVGLGETIEEIYETMDDLRANDVDILTIGQYLQPSRKHLKVQKYYTPLEFGKLRKVAMDKGFKHCQAGPLVRSSYHADEQVNEAAKEKQRQGEAQLNS</sequence>
<gene>
    <name evidence="1" type="primary">lipA</name>
    <name type="ordered locus">NWMN_0796</name>
</gene>
<keyword id="KW-0004">4Fe-4S</keyword>
<keyword id="KW-0963">Cytoplasm</keyword>
<keyword id="KW-0408">Iron</keyword>
<keyword id="KW-0411">Iron-sulfur</keyword>
<keyword id="KW-0479">Metal-binding</keyword>
<keyword id="KW-0949">S-adenosyl-L-methionine</keyword>
<keyword id="KW-0808">Transferase</keyword>
<name>LIPA_STAAE</name>
<proteinExistence type="inferred from homology"/>